<evidence type="ECO:0000255" key="1">
    <source>
        <dbReference type="HAMAP-Rule" id="MF_00228"/>
    </source>
</evidence>
<accession>C1FSC2</accession>
<protein>
    <recommendedName>
        <fullName evidence="1">Hydroxyethylthiazole kinase 1</fullName>
        <ecNumber evidence="1">2.7.1.50</ecNumber>
    </recommendedName>
    <alternativeName>
        <fullName evidence="1">4-methyl-5-beta-hydroxyethylthiazole kinase 1</fullName>
        <shortName evidence="1">TH kinase 1</shortName>
        <shortName evidence="1">Thz kinase 1</shortName>
    </alternativeName>
</protein>
<sequence>MENKNVIQKMREKTPLIHCITNYVTINDCANILLSFGASPAMCEAYDEVYDFVSISSALYINLGTLTKEQETAAVLASISAKNHNVPVVIDPVGCPAIKRKVEVINRIAEVGRIDIIKGNIGEIKFLAGMDSETRGVDSLDNGENALDACTQLAKKYNCIVAATGQKDFVSDGKRGSVIKNGTEMLTKVTGAGCMLGALCAATCANFEDKLVSTTAAILSMNIAGEKAYEKAQLPGSFRIALIDNIYMISDKEIWERGNVEWK</sequence>
<feature type="chain" id="PRO_1000198113" description="Hydroxyethylthiazole kinase 1">
    <location>
        <begin position="1"/>
        <end position="263"/>
    </location>
</feature>
<feature type="binding site" evidence="1">
    <location>
        <position position="42"/>
    </location>
    <ligand>
        <name>substrate</name>
    </ligand>
</feature>
<feature type="binding site" evidence="1">
    <location>
        <position position="118"/>
    </location>
    <ligand>
        <name>ATP</name>
        <dbReference type="ChEBI" id="CHEBI:30616"/>
    </ligand>
</feature>
<feature type="binding site" evidence="1">
    <location>
        <position position="164"/>
    </location>
    <ligand>
        <name>ATP</name>
        <dbReference type="ChEBI" id="CHEBI:30616"/>
    </ligand>
</feature>
<feature type="binding site" evidence="1">
    <location>
        <position position="191"/>
    </location>
    <ligand>
        <name>substrate</name>
    </ligand>
</feature>
<name>THIM1_CLOBJ</name>
<organism>
    <name type="scientific">Clostridium botulinum (strain Kyoto / Type A2)</name>
    <dbReference type="NCBI Taxonomy" id="536232"/>
    <lineage>
        <taxon>Bacteria</taxon>
        <taxon>Bacillati</taxon>
        <taxon>Bacillota</taxon>
        <taxon>Clostridia</taxon>
        <taxon>Eubacteriales</taxon>
        <taxon>Clostridiaceae</taxon>
        <taxon>Clostridium</taxon>
    </lineage>
</organism>
<comment type="function">
    <text evidence="1">Catalyzes the phosphorylation of the hydroxyl group of 4-methyl-5-beta-hydroxyethylthiazole (THZ).</text>
</comment>
<comment type="catalytic activity">
    <reaction evidence="1">
        <text>5-(2-hydroxyethyl)-4-methylthiazole + ATP = 4-methyl-5-(2-phosphooxyethyl)-thiazole + ADP + H(+)</text>
        <dbReference type="Rhea" id="RHEA:24212"/>
        <dbReference type="ChEBI" id="CHEBI:15378"/>
        <dbReference type="ChEBI" id="CHEBI:17957"/>
        <dbReference type="ChEBI" id="CHEBI:30616"/>
        <dbReference type="ChEBI" id="CHEBI:58296"/>
        <dbReference type="ChEBI" id="CHEBI:456216"/>
        <dbReference type="EC" id="2.7.1.50"/>
    </reaction>
</comment>
<comment type="cofactor">
    <cofactor evidence="1">
        <name>Mg(2+)</name>
        <dbReference type="ChEBI" id="CHEBI:18420"/>
    </cofactor>
</comment>
<comment type="pathway">
    <text evidence="1">Cofactor biosynthesis; thiamine diphosphate biosynthesis; 4-methyl-5-(2-phosphoethyl)-thiazole from 5-(2-hydroxyethyl)-4-methylthiazole: step 1/1.</text>
</comment>
<comment type="similarity">
    <text evidence="1">Belongs to the Thz kinase family.</text>
</comment>
<gene>
    <name evidence="1" type="primary">thiM1</name>
    <name type="ordered locus">CLM_0532</name>
</gene>
<reference key="1">
    <citation type="submission" date="2008-10" db="EMBL/GenBank/DDBJ databases">
        <title>Genome sequence of Clostridium botulinum A2 Kyoto.</title>
        <authorList>
            <person name="Shrivastava S."/>
            <person name="Brinkac L.M."/>
            <person name="Brown J.L."/>
            <person name="Bruce D."/>
            <person name="Detter C.C."/>
            <person name="Johnson E.A."/>
            <person name="Munk C.A."/>
            <person name="Smith L.A."/>
            <person name="Smith T.J."/>
            <person name="Sutton G."/>
            <person name="Brettin T.S."/>
        </authorList>
    </citation>
    <scope>NUCLEOTIDE SEQUENCE [LARGE SCALE GENOMIC DNA]</scope>
    <source>
        <strain>Kyoto / Type A2</strain>
    </source>
</reference>
<dbReference type="EC" id="2.7.1.50" evidence="1"/>
<dbReference type="EMBL" id="CP001581">
    <property type="protein sequence ID" value="ACO87276.1"/>
    <property type="molecule type" value="Genomic_DNA"/>
</dbReference>
<dbReference type="RefSeq" id="WP_003356511.1">
    <property type="nucleotide sequence ID" value="NC_012563.1"/>
</dbReference>
<dbReference type="SMR" id="C1FSC2"/>
<dbReference type="KEGG" id="cby:CLM_0532"/>
<dbReference type="eggNOG" id="COG2145">
    <property type="taxonomic scope" value="Bacteria"/>
</dbReference>
<dbReference type="HOGENOM" id="CLU_019943_0_0_9"/>
<dbReference type="UniPathway" id="UPA00060">
    <property type="reaction ID" value="UER00139"/>
</dbReference>
<dbReference type="Proteomes" id="UP000001374">
    <property type="component" value="Chromosome"/>
</dbReference>
<dbReference type="GO" id="GO:0005524">
    <property type="term" value="F:ATP binding"/>
    <property type="evidence" value="ECO:0007669"/>
    <property type="project" value="UniProtKB-UniRule"/>
</dbReference>
<dbReference type="GO" id="GO:0004417">
    <property type="term" value="F:hydroxyethylthiazole kinase activity"/>
    <property type="evidence" value="ECO:0007669"/>
    <property type="project" value="UniProtKB-UniRule"/>
</dbReference>
<dbReference type="GO" id="GO:0000287">
    <property type="term" value="F:magnesium ion binding"/>
    <property type="evidence" value="ECO:0007669"/>
    <property type="project" value="UniProtKB-UniRule"/>
</dbReference>
<dbReference type="GO" id="GO:0009228">
    <property type="term" value="P:thiamine biosynthetic process"/>
    <property type="evidence" value="ECO:0007669"/>
    <property type="project" value="UniProtKB-KW"/>
</dbReference>
<dbReference type="GO" id="GO:0009229">
    <property type="term" value="P:thiamine diphosphate biosynthetic process"/>
    <property type="evidence" value="ECO:0007669"/>
    <property type="project" value="UniProtKB-UniRule"/>
</dbReference>
<dbReference type="CDD" id="cd01170">
    <property type="entry name" value="THZ_kinase"/>
    <property type="match status" value="1"/>
</dbReference>
<dbReference type="Gene3D" id="3.40.1190.20">
    <property type="match status" value="1"/>
</dbReference>
<dbReference type="HAMAP" id="MF_00228">
    <property type="entry name" value="Thz_kinase"/>
    <property type="match status" value="1"/>
</dbReference>
<dbReference type="InterPro" id="IPR000417">
    <property type="entry name" value="Hyethyz_kinase"/>
</dbReference>
<dbReference type="InterPro" id="IPR029056">
    <property type="entry name" value="Ribokinase-like"/>
</dbReference>
<dbReference type="NCBIfam" id="NF006830">
    <property type="entry name" value="PRK09355.1"/>
    <property type="match status" value="1"/>
</dbReference>
<dbReference type="NCBIfam" id="TIGR00694">
    <property type="entry name" value="thiM"/>
    <property type="match status" value="1"/>
</dbReference>
<dbReference type="Pfam" id="PF02110">
    <property type="entry name" value="HK"/>
    <property type="match status" value="1"/>
</dbReference>
<dbReference type="PIRSF" id="PIRSF000513">
    <property type="entry name" value="Thz_kinase"/>
    <property type="match status" value="1"/>
</dbReference>
<dbReference type="PRINTS" id="PR01099">
    <property type="entry name" value="HYETHTZKNASE"/>
</dbReference>
<dbReference type="SUPFAM" id="SSF53613">
    <property type="entry name" value="Ribokinase-like"/>
    <property type="match status" value="1"/>
</dbReference>
<keyword id="KW-0067">ATP-binding</keyword>
<keyword id="KW-0418">Kinase</keyword>
<keyword id="KW-0460">Magnesium</keyword>
<keyword id="KW-0479">Metal-binding</keyword>
<keyword id="KW-0547">Nucleotide-binding</keyword>
<keyword id="KW-0784">Thiamine biosynthesis</keyword>
<keyword id="KW-0808">Transferase</keyword>
<proteinExistence type="inferred from homology"/>